<protein>
    <recommendedName>
        <fullName evidence="1">Pantothenate synthetase</fullName>
        <shortName evidence="1">PS</shortName>
        <ecNumber evidence="1">6.3.2.1</ecNumber>
    </recommendedName>
    <alternativeName>
        <fullName evidence="1">Pantoate--beta-alanine ligase</fullName>
    </alternativeName>
    <alternativeName>
        <fullName evidence="1">Pantoate-activating enzyme</fullName>
    </alternativeName>
</protein>
<proteinExistence type="inferred from homology"/>
<gene>
    <name evidence="1" type="primary">panC</name>
    <name type="ordered locus">Smed_2060</name>
</gene>
<comment type="function">
    <text evidence="1">Catalyzes the condensation of pantoate with beta-alanine in an ATP-dependent reaction via a pantoyl-adenylate intermediate.</text>
</comment>
<comment type="catalytic activity">
    <reaction evidence="1">
        <text>(R)-pantoate + beta-alanine + ATP = (R)-pantothenate + AMP + diphosphate + H(+)</text>
        <dbReference type="Rhea" id="RHEA:10912"/>
        <dbReference type="ChEBI" id="CHEBI:15378"/>
        <dbReference type="ChEBI" id="CHEBI:15980"/>
        <dbReference type="ChEBI" id="CHEBI:29032"/>
        <dbReference type="ChEBI" id="CHEBI:30616"/>
        <dbReference type="ChEBI" id="CHEBI:33019"/>
        <dbReference type="ChEBI" id="CHEBI:57966"/>
        <dbReference type="ChEBI" id="CHEBI:456215"/>
        <dbReference type="EC" id="6.3.2.1"/>
    </reaction>
</comment>
<comment type="pathway">
    <text evidence="1">Cofactor biosynthesis; (R)-pantothenate biosynthesis; (R)-pantothenate from (R)-pantoate and beta-alanine: step 1/1.</text>
</comment>
<comment type="subunit">
    <text evidence="1">Homodimer.</text>
</comment>
<comment type="subcellular location">
    <subcellularLocation>
        <location evidence="1">Cytoplasm</location>
    </subcellularLocation>
</comment>
<comment type="miscellaneous">
    <text evidence="1">The reaction proceeds by a bi uni uni bi ping pong mechanism.</text>
</comment>
<comment type="similarity">
    <text evidence="1">Belongs to the pantothenate synthetase family.</text>
</comment>
<feature type="chain" id="PRO_1000076866" description="Pantothenate synthetase">
    <location>
        <begin position="1"/>
        <end position="291"/>
    </location>
</feature>
<feature type="active site" description="Proton donor" evidence="1">
    <location>
        <position position="37"/>
    </location>
</feature>
<feature type="binding site" evidence="1">
    <location>
        <begin position="30"/>
        <end position="37"/>
    </location>
    <ligand>
        <name>ATP</name>
        <dbReference type="ChEBI" id="CHEBI:30616"/>
    </ligand>
</feature>
<feature type="binding site" evidence="1">
    <location>
        <position position="61"/>
    </location>
    <ligand>
        <name>(R)-pantoate</name>
        <dbReference type="ChEBI" id="CHEBI:15980"/>
    </ligand>
</feature>
<feature type="binding site" evidence="1">
    <location>
        <position position="61"/>
    </location>
    <ligand>
        <name>beta-alanine</name>
        <dbReference type="ChEBI" id="CHEBI:57966"/>
    </ligand>
</feature>
<feature type="binding site" evidence="1">
    <location>
        <begin position="147"/>
        <end position="150"/>
    </location>
    <ligand>
        <name>ATP</name>
        <dbReference type="ChEBI" id="CHEBI:30616"/>
    </ligand>
</feature>
<feature type="binding site" evidence="1">
    <location>
        <position position="153"/>
    </location>
    <ligand>
        <name>(R)-pantoate</name>
        <dbReference type="ChEBI" id="CHEBI:15980"/>
    </ligand>
</feature>
<feature type="binding site" evidence="1">
    <location>
        <position position="176"/>
    </location>
    <ligand>
        <name>ATP</name>
        <dbReference type="ChEBI" id="CHEBI:30616"/>
    </ligand>
</feature>
<feature type="binding site" evidence="1">
    <location>
        <begin position="184"/>
        <end position="187"/>
    </location>
    <ligand>
        <name>ATP</name>
        <dbReference type="ChEBI" id="CHEBI:30616"/>
    </ligand>
</feature>
<accession>A6UB63</accession>
<name>PANC_SINMW</name>
<sequence length="291" mass="32017">MRTITTIAELRDALAEHRRAGRSVGLVPTMGYLHVGHMELVRRARGENDVVVASIFVNPLQFGANEDLGEYPRDLARDQELLTDGGVDILFAPGVSDMYPRPMETVVDVPKLGSELEGAVRPGHFAGVATVVTKLFNIVQPDRAYFGEKDFQQLQIIRRMVEDLAQPVKVVGVPTVREEDGLACSSRNVYLTTEERRAAAIVPRALDEAERLIASGVTEPAEIEKRVLEFLAGEPLARPEVVALRDPETLEPFGEISGKPVLILLFVRFGTTKLLDNRVIAPKSARFAKVA</sequence>
<reference key="1">
    <citation type="submission" date="2007-06" db="EMBL/GenBank/DDBJ databases">
        <title>Complete sequence of Sinorhizobium medicae WSM419 chromosome.</title>
        <authorList>
            <consortium name="US DOE Joint Genome Institute"/>
            <person name="Copeland A."/>
            <person name="Lucas S."/>
            <person name="Lapidus A."/>
            <person name="Barry K."/>
            <person name="Glavina del Rio T."/>
            <person name="Dalin E."/>
            <person name="Tice H."/>
            <person name="Pitluck S."/>
            <person name="Chain P."/>
            <person name="Malfatti S."/>
            <person name="Shin M."/>
            <person name="Vergez L."/>
            <person name="Schmutz J."/>
            <person name="Larimer F."/>
            <person name="Land M."/>
            <person name="Hauser L."/>
            <person name="Kyrpides N."/>
            <person name="Mikhailova N."/>
            <person name="Reeve W.G."/>
            <person name="Richardson P."/>
        </authorList>
    </citation>
    <scope>NUCLEOTIDE SEQUENCE [LARGE SCALE GENOMIC DNA]</scope>
    <source>
        <strain>WSM419</strain>
    </source>
</reference>
<keyword id="KW-0067">ATP-binding</keyword>
<keyword id="KW-0963">Cytoplasm</keyword>
<keyword id="KW-0436">Ligase</keyword>
<keyword id="KW-0547">Nucleotide-binding</keyword>
<keyword id="KW-0566">Pantothenate biosynthesis</keyword>
<organism>
    <name type="scientific">Sinorhizobium medicae (strain WSM419)</name>
    <name type="common">Ensifer medicae</name>
    <dbReference type="NCBI Taxonomy" id="366394"/>
    <lineage>
        <taxon>Bacteria</taxon>
        <taxon>Pseudomonadati</taxon>
        <taxon>Pseudomonadota</taxon>
        <taxon>Alphaproteobacteria</taxon>
        <taxon>Hyphomicrobiales</taxon>
        <taxon>Rhizobiaceae</taxon>
        <taxon>Sinorhizobium/Ensifer group</taxon>
        <taxon>Sinorhizobium</taxon>
    </lineage>
</organism>
<dbReference type="EC" id="6.3.2.1" evidence="1"/>
<dbReference type="EMBL" id="CP000738">
    <property type="protein sequence ID" value="ABR60893.1"/>
    <property type="molecule type" value="Genomic_DNA"/>
</dbReference>
<dbReference type="RefSeq" id="WP_011976190.1">
    <property type="nucleotide sequence ID" value="NC_009636.1"/>
</dbReference>
<dbReference type="RefSeq" id="YP_001327728.1">
    <property type="nucleotide sequence ID" value="NC_009636.1"/>
</dbReference>
<dbReference type="SMR" id="A6UB63"/>
<dbReference type="STRING" id="366394.Smed_2060"/>
<dbReference type="GeneID" id="61612969"/>
<dbReference type="KEGG" id="smd:Smed_2060"/>
<dbReference type="PATRIC" id="fig|366394.8.peg.5216"/>
<dbReference type="eggNOG" id="COG0414">
    <property type="taxonomic scope" value="Bacteria"/>
</dbReference>
<dbReference type="HOGENOM" id="CLU_047148_0_0_5"/>
<dbReference type="OrthoDB" id="9773087at2"/>
<dbReference type="UniPathway" id="UPA00028">
    <property type="reaction ID" value="UER00005"/>
</dbReference>
<dbReference type="Proteomes" id="UP000001108">
    <property type="component" value="Chromosome"/>
</dbReference>
<dbReference type="GO" id="GO:0005829">
    <property type="term" value="C:cytosol"/>
    <property type="evidence" value="ECO:0007669"/>
    <property type="project" value="TreeGrafter"/>
</dbReference>
<dbReference type="GO" id="GO:0005524">
    <property type="term" value="F:ATP binding"/>
    <property type="evidence" value="ECO:0007669"/>
    <property type="project" value="UniProtKB-KW"/>
</dbReference>
<dbReference type="GO" id="GO:0004592">
    <property type="term" value="F:pantoate-beta-alanine ligase activity"/>
    <property type="evidence" value="ECO:0007669"/>
    <property type="project" value="UniProtKB-UniRule"/>
</dbReference>
<dbReference type="GO" id="GO:0015940">
    <property type="term" value="P:pantothenate biosynthetic process"/>
    <property type="evidence" value="ECO:0007669"/>
    <property type="project" value="UniProtKB-UniRule"/>
</dbReference>
<dbReference type="CDD" id="cd00560">
    <property type="entry name" value="PanC"/>
    <property type="match status" value="1"/>
</dbReference>
<dbReference type="FunFam" id="3.40.50.620:FF:000013">
    <property type="entry name" value="Pantothenate synthetase"/>
    <property type="match status" value="1"/>
</dbReference>
<dbReference type="Gene3D" id="3.40.50.620">
    <property type="entry name" value="HUPs"/>
    <property type="match status" value="1"/>
</dbReference>
<dbReference type="Gene3D" id="3.30.1300.10">
    <property type="entry name" value="Pantoate-beta-alanine ligase, C-terminal domain"/>
    <property type="match status" value="1"/>
</dbReference>
<dbReference type="HAMAP" id="MF_00158">
    <property type="entry name" value="PanC"/>
    <property type="match status" value="1"/>
</dbReference>
<dbReference type="InterPro" id="IPR003721">
    <property type="entry name" value="Pantoate_ligase"/>
</dbReference>
<dbReference type="InterPro" id="IPR042176">
    <property type="entry name" value="Pantoate_ligase_C"/>
</dbReference>
<dbReference type="InterPro" id="IPR014729">
    <property type="entry name" value="Rossmann-like_a/b/a_fold"/>
</dbReference>
<dbReference type="NCBIfam" id="TIGR00018">
    <property type="entry name" value="panC"/>
    <property type="match status" value="1"/>
</dbReference>
<dbReference type="PANTHER" id="PTHR21299">
    <property type="entry name" value="CYTIDYLATE KINASE/PANTOATE-BETA-ALANINE LIGASE"/>
    <property type="match status" value="1"/>
</dbReference>
<dbReference type="PANTHER" id="PTHR21299:SF1">
    <property type="entry name" value="PANTOATE--BETA-ALANINE LIGASE"/>
    <property type="match status" value="1"/>
</dbReference>
<dbReference type="Pfam" id="PF02569">
    <property type="entry name" value="Pantoate_ligase"/>
    <property type="match status" value="1"/>
</dbReference>
<dbReference type="SUPFAM" id="SSF52374">
    <property type="entry name" value="Nucleotidylyl transferase"/>
    <property type="match status" value="1"/>
</dbReference>
<evidence type="ECO:0000255" key="1">
    <source>
        <dbReference type="HAMAP-Rule" id="MF_00158"/>
    </source>
</evidence>